<proteinExistence type="inferred from homology"/>
<sequence>MVSLSIIARKLFGSARESRIKRLRQKALQISALEEHFQKLSDGELCQKTDEFRQRLTDGETIDSLLPEAFATVREAAKRVYNMRPFDVQLIGGMVLHNRGIAEMRTGEGKTLMATLPVYLNALEGKGVHVVTVNDYLANRDAETMGKIYSFLGLTTGVILHDLDTNARRAAYACDITYATNNELGFDYLRDNMTFDRSQMVQRGHHYAIIDEVDSILIDEARTPLIISGPLEDRTDFYNLVNTFIPNLTPEDYEIDEKQKTTTFTEIGTEKIEKMLEQAGHLKNDSLYDIENVAIVHHVNNALKAHKLFVRDKDYIVRNGEIVIIDEFTGRMMPGRRYSEGLHQALEAKEHVAIQPENQTLASITFQNYFRMYEKLSGMTGTATTEAEEFSNIYGLEVVEIPTNLPVQRLDEDDEIYRTTEEKYRAIVRDIRQAHEKGQPILVGTTSIEKSEQLAERLRKEGITDFKVLNARYHEQEAYIVAQAGVPGALTIATNMAGRGTDIQLGGNIEMRIRQELQDIPEGSERTAKIEKIKQDVQKLKEKSLAAGGLYVLATERHESRRIDNQLRGRSGRQGDPGRSKFFLSLQDDLMRIFGSDRMDSILQKLGLKENEAIIHPWINKALEKAQKKVEARNFEIRKNLLKYDDVMNDQRKVIFEQRMEIMNAENLTDMMIEMRNDVIEDLIETHIPSGTYSEKWNAKALQSELSQCFNLELPIEEWVKEDGIAEQQILERILDAVTKFENERTEHYSPEMMVYFHKAILLKTIDMLWREHLINLDHLRSVIGFRGYAQRDPLNEYKTEAFELFQTMLKNLRRDVVSKLMSFEIVQHPLESTMPQEMYAEHSTSRNIDKKDGILWAQMQNNTEVSDPIKRDPGDSSTWEKVGRNELCPCGSSKKYKHCHGSFIPKMDG</sequence>
<accession>A1URS7</accession>
<feature type="chain" id="PRO_0000320735" description="Protein translocase subunit SecA">
    <location>
        <begin position="1"/>
        <end position="910"/>
    </location>
</feature>
<feature type="binding site" evidence="1">
    <location>
        <position position="89"/>
    </location>
    <ligand>
        <name>ATP</name>
        <dbReference type="ChEBI" id="CHEBI:30616"/>
    </ligand>
</feature>
<feature type="binding site" evidence="1">
    <location>
        <begin position="107"/>
        <end position="111"/>
    </location>
    <ligand>
        <name>ATP</name>
        <dbReference type="ChEBI" id="CHEBI:30616"/>
    </ligand>
</feature>
<feature type="binding site" evidence="1">
    <location>
        <position position="502"/>
    </location>
    <ligand>
        <name>ATP</name>
        <dbReference type="ChEBI" id="CHEBI:30616"/>
    </ligand>
</feature>
<feature type="binding site" evidence="1">
    <location>
        <position position="889"/>
    </location>
    <ligand>
        <name>Zn(2+)</name>
        <dbReference type="ChEBI" id="CHEBI:29105"/>
    </ligand>
</feature>
<feature type="binding site" evidence="1">
    <location>
        <position position="891"/>
    </location>
    <ligand>
        <name>Zn(2+)</name>
        <dbReference type="ChEBI" id="CHEBI:29105"/>
    </ligand>
</feature>
<feature type="binding site" evidence="1">
    <location>
        <position position="900"/>
    </location>
    <ligand>
        <name>Zn(2+)</name>
        <dbReference type="ChEBI" id="CHEBI:29105"/>
    </ligand>
</feature>
<feature type="binding site" evidence="1">
    <location>
        <position position="901"/>
    </location>
    <ligand>
        <name>Zn(2+)</name>
        <dbReference type="ChEBI" id="CHEBI:29105"/>
    </ligand>
</feature>
<evidence type="ECO:0000255" key="1">
    <source>
        <dbReference type="HAMAP-Rule" id="MF_01382"/>
    </source>
</evidence>
<gene>
    <name evidence="1" type="primary">secA</name>
    <name type="ordered locus">BARBAKC583_0361</name>
</gene>
<reference key="1">
    <citation type="submission" date="2006-12" db="EMBL/GenBank/DDBJ databases">
        <authorList>
            <person name="Hendrix L."/>
            <person name="Mohamoud Y."/>
            <person name="Radune D."/>
            <person name="Shvartsbeyn A."/>
            <person name="Daugherty S."/>
            <person name="Dodson R."/>
            <person name="Durkin A.S."/>
            <person name="Harkins D."/>
            <person name="Huot H."/>
            <person name="Kothari S.P."/>
            <person name="Madupu R."/>
            <person name="Li J."/>
            <person name="Nelson W.C."/>
            <person name="Shrivastava S."/>
            <person name="Giglio M.G."/>
            <person name="Haft D."/>
            <person name="Selengut J."/>
            <person name="Fraser-Ligget C."/>
            <person name="Seshadri R."/>
        </authorList>
    </citation>
    <scope>NUCLEOTIDE SEQUENCE [LARGE SCALE GENOMIC DNA]</scope>
    <source>
        <strain>ATCC 35685 / KC583 / Herrer 020/F12,63</strain>
    </source>
</reference>
<protein>
    <recommendedName>
        <fullName evidence="1">Protein translocase subunit SecA</fullName>
        <ecNumber evidence="1">7.4.2.8</ecNumber>
    </recommendedName>
</protein>
<name>SECA_BARBK</name>
<organism>
    <name type="scientific">Bartonella bacilliformis (strain ATCC 35685 / KC583 / Herrer 020/F12,63)</name>
    <dbReference type="NCBI Taxonomy" id="360095"/>
    <lineage>
        <taxon>Bacteria</taxon>
        <taxon>Pseudomonadati</taxon>
        <taxon>Pseudomonadota</taxon>
        <taxon>Alphaproteobacteria</taxon>
        <taxon>Hyphomicrobiales</taxon>
        <taxon>Bartonellaceae</taxon>
        <taxon>Bartonella</taxon>
    </lineage>
</organism>
<comment type="function">
    <text evidence="1">Part of the Sec protein translocase complex. Interacts with the SecYEG preprotein conducting channel. Has a central role in coupling the hydrolysis of ATP to the transfer of proteins into and across the cell membrane, serving both as a receptor for the preprotein-SecB complex and as an ATP-driven molecular motor driving the stepwise translocation of polypeptide chains across the membrane.</text>
</comment>
<comment type="catalytic activity">
    <reaction evidence="1">
        <text>ATP + H2O + cellular proteinSide 1 = ADP + phosphate + cellular proteinSide 2.</text>
        <dbReference type="EC" id="7.4.2.8"/>
    </reaction>
</comment>
<comment type="cofactor">
    <cofactor evidence="1">
        <name>Zn(2+)</name>
        <dbReference type="ChEBI" id="CHEBI:29105"/>
    </cofactor>
    <text evidence="1">May bind 1 zinc ion per subunit.</text>
</comment>
<comment type="subunit">
    <text evidence="1">Monomer and homodimer. Part of the essential Sec protein translocation apparatus which comprises SecA, SecYEG and auxiliary proteins SecDF-YajC and YidC.</text>
</comment>
<comment type="subcellular location">
    <subcellularLocation>
        <location evidence="1">Cell inner membrane</location>
        <topology evidence="1">Peripheral membrane protein</topology>
        <orientation evidence="1">Cytoplasmic side</orientation>
    </subcellularLocation>
    <subcellularLocation>
        <location evidence="1">Cytoplasm</location>
    </subcellularLocation>
    <text evidence="1">Distribution is 50-50.</text>
</comment>
<comment type="similarity">
    <text evidence="1">Belongs to the SecA family.</text>
</comment>
<dbReference type="EC" id="7.4.2.8" evidence="1"/>
<dbReference type="EMBL" id="CP000524">
    <property type="protein sequence ID" value="ABM45515.1"/>
    <property type="molecule type" value="Genomic_DNA"/>
</dbReference>
<dbReference type="RefSeq" id="WP_005766323.1">
    <property type="nucleotide sequence ID" value="NC_008783.1"/>
</dbReference>
<dbReference type="SMR" id="A1URS7"/>
<dbReference type="STRING" id="360095.BARBAKC583_0361"/>
<dbReference type="GeneID" id="4683798"/>
<dbReference type="KEGG" id="bbk:BARBAKC583_0361"/>
<dbReference type="PATRIC" id="fig|360095.6.peg.344"/>
<dbReference type="eggNOG" id="COG0653">
    <property type="taxonomic scope" value="Bacteria"/>
</dbReference>
<dbReference type="HOGENOM" id="CLU_005314_3_0_5"/>
<dbReference type="OrthoDB" id="9805579at2"/>
<dbReference type="Proteomes" id="UP000000643">
    <property type="component" value="Chromosome"/>
</dbReference>
<dbReference type="GO" id="GO:0031522">
    <property type="term" value="C:cell envelope Sec protein transport complex"/>
    <property type="evidence" value="ECO:0007669"/>
    <property type="project" value="TreeGrafter"/>
</dbReference>
<dbReference type="GO" id="GO:0005829">
    <property type="term" value="C:cytosol"/>
    <property type="evidence" value="ECO:0007669"/>
    <property type="project" value="TreeGrafter"/>
</dbReference>
<dbReference type="GO" id="GO:0005886">
    <property type="term" value="C:plasma membrane"/>
    <property type="evidence" value="ECO:0007669"/>
    <property type="project" value="UniProtKB-SubCell"/>
</dbReference>
<dbReference type="GO" id="GO:0005524">
    <property type="term" value="F:ATP binding"/>
    <property type="evidence" value="ECO:0007669"/>
    <property type="project" value="UniProtKB-UniRule"/>
</dbReference>
<dbReference type="GO" id="GO:0046872">
    <property type="term" value="F:metal ion binding"/>
    <property type="evidence" value="ECO:0007669"/>
    <property type="project" value="UniProtKB-KW"/>
</dbReference>
<dbReference type="GO" id="GO:0008564">
    <property type="term" value="F:protein-exporting ATPase activity"/>
    <property type="evidence" value="ECO:0007669"/>
    <property type="project" value="UniProtKB-EC"/>
</dbReference>
<dbReference type="GO" id="GO:0065002">
    <property type="term" value="P:intracellular protein transmembrane transport"/>
    <property type="evidence" value="ECO:0007669"/>
    <property type="project" value="UniProtKB-UniRule"/>
</dbReference>
<dbReference type="GO" id="GO:0017038">
    <property type="term" value="P:protein import"/>
    <property type="evidence" value="ECO:0007669"/>
    <property type="project" value="InterPro"/>
</dbReference>
<dbReference type="GO" id="GO:0006605">
    <property type="term" value="P:protein targeting"/>
    <property type="evidence" value="ECO:0007669"/>
    <property type="project" value="UniProtKB-UniRule"/>
</dbReference>
<dbReference type="GO" id="GO:0043952">
    <property type="term" value="P:protein transport by the Sec complex"/>
    <property type="evidence" value="ECO:0007669"/>
    <property type="project" value="TreeGrafter"/>
</dbReference>
<dbReference type="CDD" id="cd17928">
    <property type="entry name" value="DEXDc_SecA"/>
    <property type="match status" value="1"/>
</dbReference>
<dbReference type="CDD" id="cd18803">
    <property type="entry name" value="SF2_C_secA"/>
    <property type="match status" value="1"/>
</dbReference>
<dbReference type="FunFam" id="3.90.1440.10:FF:000001">
    <property type="entry name" value="Preprotein translocase subunit SecA"/>
    <property type="match status" value="1"/>
</dbReference>
<dbReference type="FunFam" id="1.10.3060.10:FF:000003">
    <property type="entry name" value="Protein translocase subunit SecA"/>
    <property type="match status" value="1"/>
</dbReference>
<dbReference type="FunFam" id="3.40.50.300:FF:000334">
    <property type="entry name" value="Protein translocase subunit SecA"/>
    <property type="match status" value="1"/>
</dbReference>
<dbReference type="FunFam" id="3.40.50.300:FF:001790">
    <property type="entry name" value="Protein translocase subunit SecA"/>
    <property type="match status" value="1"/>
</dbReference>
<dbReference type="Gene3D" id="1.10.3060.10">
    <property type="entry name" value="Helical scaffold and wing domains of SecA"/>
    <property type="match status" value="1"/>
</dbReference>
<dbReference type="Gene3D" id="3.40.50.300">
    <property type="entry name" value="P-loop containing nucleotide triphosphate hydrolases"/>
    <property type="match status" value="2"/>
</dbReference>
<dbReference type="Gene3D" id="3.90.1440.10">
    <property type="entry name" value="SecA, preprotein cross-linking domain"/>
    <property type="match status" value="1"/>
</dbReference>
<dbReference type="HAMAP" id="MF_01382">
    <property type="entry name" value="SecA"/>
    <property type="match status" value="1"/>
</dbReference>
<dbReference type="InterPro" id="IPR014001">
    <property type="entry name" value="Helicase_ATP-bd"/>
</dbReference>
<dbReference type="InterPro" id="IPR001650">
    <property type="entry name" value="Helicase_C-like"/>
</dbReference>
<dbReference type="InterPro" id="IPR027417">
    <property type="entry name" value="P-loop_NTPase"/>
</dbReference>
<dbReference type="InterPro" id="IPR004027">
    <property type="entry name" value="SEC_C_motif"/>
</dbReference>
<dbReference type="InterPro" id="IPR000185">
    <property type="entry name" value="SecA"/>
</dbReference>
<dbReference type="InterPro" id="IPR011115">
    <property type="entry name" value="SecA_DEAD"/>
</dbReference>
<dbReference type="InterPro" id="IPR014018">
    <property type="entry name" value="SecA_motor_DEAD"/>
</dbReference>
<dbReference type="InterPro" id="IPR011130">
    <property type="entry name" value="SecA_preprotein_X-link_dom"/>
</dbReference>
<dbReference type="InterPro" id="IPR044722">
    <property type="entry name" value="SecA_SF2_C"/>
</dbReference>
<dbReference type="InterPro" id="IPR011116">
    <property type="entry name" value="SecA_Wing/Scaffold"/>
</dbReference>
<dbReference type="InterPro" id="IPR036266">
    <property type="entry name" value="SecA_Wing/Scaffold_sf"/>
</dbReference>
<dbReference type="InterPro" id="IPR036670">
    <property type="entry name" value="SecA_X-link_sf"/>
</dbReference>
<dbReference type="NCBIfam" id="NF009538">
    <property type="entry name" value="PRK12904.1"/>
    <property type="match status" value="1"/>
</dbReference>
<dbReference type="NCBIfam" id="TIGR00963">
    <property type="entry name" value="secA"/>
    <property type="match status" value="1"/>
</dbReference>
<dbReference type="PANTHER" id="PTHR30612:SF0">
    <property type="entry name" value="CHLOROPLAST PROTEIN-TRANSPORTING ATPASE"/>
    <property type="match status" value="1"/>
</dbReference>
<dbReference type="PANTHER" id="PTHR30612">
    <property type="entry name" value="SECA INNER MEMBRANE COMPONENT OF SEC PROTEIN SECRETION SYSTEM"/>
    <property type="match status" value="1"/>
</dbReference>
<dbReference type="Pfam" id="PF21090">
    <property type="entry name" value="P-loop_SecA"/>
    <property type="match status" value="1"/>
</dbReference>
<dbReference type="Pfam" id="PF02810">
    <property type="entry name" value="SEC-C"/>
    <property type="match status" value="1"/>
</dbReference>
<dbReference type="Pfam" id="PF07517">
    <property type="entry name" value="SecA_DEAD"/>
    <property type="match status" value="1"/>
</dbReference>
<dbReference type="Pfam" id="PF01043">
    <property type="entry name" value="SecA_PP_bind"/>
    <property type="match status" value="1"/>
</dbReference>
<dbReference type="Pfam" id="PF07516">
    <property type="entry name" value="SecA_SW"/>
    <property type="match status" value="1"/>
</dbReference>
<dbReference type="PRINTS" id="PR00906">
    <property type="entry name" value="SECA"/>
</dbReference>
<dbReference type="SMART" id="SM00957">
    <property type="entry name" value="SecA_DEAD"/>
    <property type="match status" value="1"/>
</dbReference>
<dbReference type="SMART" id="SM00958">
    <property type="entry name" value="SecA_PP_bind"/>
    <property type="match status" value="1"/>
</dbReference>
<dbReference type="SUPFAM" id="SSF81886">
    <property type="entry name" value="Helical scaffold and wing domains of SecA"/>
    <property type="match status" value="1"/>
</dbReference>
<dbReference type="SUPFAM" id="SSF52540">
    <property type="entry name" value="P-loop containing nucleoside triphosphate hydrolases"/>
    <property type="match status" value="2"/>
</dbReference>
<dbReference type="SUPFAM" id="SSF81767">
    <property type="entry name" value="Pre-protein crosslinking domain of SecA"/>
    <property type="match status" value="1"/>
</dbReference>
<dbReference type="PROSITE" id="PS51196">
    <property type="entry name" value="SECA_MOTOR_DEAD"/>
    <property type="match status" value="1"/>
</dbReference>
<keyword id="KW-0067">ATP-binding</keyword>
<keyword id="KW-0997">Cell inner membrane</keyword>
<keyword id="KW-1003">Cell membrane</keyword>
<keyword id="KW-0963">Cytoplasm</keyword>
<keyword id="KW-0472">Membrane</keyword>
<keyword id="KW-0479">Metal-binding</keyword>
<keyword id="KW-0547">Nucleotide-binding</keyword>
<keyword id="KW-0653">Protein transport</keyword>
<keyword id="KW-1278">Translocase</keyword>
<keyword id="KW-0811">Translocation</keyword>
<keyword id="KW-0813">Transport</keyword>
<keyword id="KW-0862">Zinc</keyword>